<evidence type="ECO:0000250" key="1"/>
<evidence type="ECO:0000250" key="2">
    <source>
        <dbReference type="UniProtKB" id="P98170"/>
    </source>
</evidence>
<evidence type="ECO:0000250" key="3">
    <source>
        <dbReference type="UniProtKB" id="Q60989"/>
    </source>
</evidence>
<evidence type="ECO:0000255" key="4">
    <source>
        <dbReference type="PROSITE-ProRule" id="PRU00029"/>
    </source>
</evidence>
<evidence type="ECO:0000255" key="5">
    <source>
        <dbReference type="PROSITE-ProRule" id="PRU00175"/>
    </source>
</evidence>
<evidence type="ECO:0000305" key="6"/>
<gene>
    <name type="primary">Xiap</name>
    <name type="synonym">Api3</name>
    <name type="synonym">Birc4</name>
</gene>
<feature type="chain" id="PRO_0000122354" description="E3 ubiquitin-protein ligase XIAP">
    <location>
        <begin position="1"/>
        <end position="496"/>
    </location>
</feature>
<feature type="repeat" description="BIR 1">
    <location>
        <begin position="26"/>
        <end position="93"/>
    </location>
</feature>
<feature type="repeat" description="BIR 2">
    <location>
        <begin position="163"/>
        <end position="230"/>
    </location>
</feature>
<feature type="repeat" description="BIR 3">
    <location>
        <begin position="264"/>
        <end position="329"/>
    </location>
</feature>
<feature type="zinc finger region" description="RING-type" evidence="5">
    <location>
        <begin position="449"/>
        <end position="484"/>
    </location>
</feature>
<feature type="binding site" evidence="4">
    <location>
        <position position="299"/>
    </location>
    <ligand>
        <name>Zn(2+)</name>
        <dbReference type="ChEBI" id="CHEBI:29105"/>
    </ligand>
</feature>
<feature type="binding site" evidence="4">
    <location>
        <position position="302"/>
    </location>
    <ligand>
        <name>Zn(2+)</name>
        <dbReference type="ChEBI" id="CHEBI:29105"/>
    </ligand>
</feature>
<feature type="binding site" evidence="4">
    <location>
        <position position="319"/>
    </location>
    <ligand>
        <name>Zn(2+)</name>
        <dbReference type="ChEBI" id="CHEBI:29105"/>
    </ligand>
</feature>
<feature type="binding site" evidence="4">
    <location>
        <position position="326"/>
    </location>
    <ligand>
        <name>Zn(2+)</name>
        <dbReference type="ChEBI" id="CHEBI:29105"/>
    </ligand>
</feature>
<feature type="modified residue" description="S-nitrosocysteine" evidence="2">
    <location>
        <position position="449"/>
    </location>
</feature>
<feature type="cross-link" description="Glycyl lysine isopeptide (Lys-Gly) (interchain with G-Cter in ubiquitin)" evidence="2">
    <location>
        <position position="321"/>
    </location>
</feature>
<feature type="cross-link" description="Glycyl lysine isopeptide (Lys-Gly) (interchain with G-Cter in ubiquitin)" evidence="2">
    <location>
        <position position="327"/>
    </location>
</feature>
<accession>Q9R0I6</accession>
<protein>
    <recommendedName>
        <fullName>E3 ubiquitin-protein ligase XIAP</fullName>
        <ecNumber evidence="2">2.3.2.27</ecNumber>
    </recommendedName>
    <alternativeName>
        <fullName>Baculoviral IAP repeat-containing protein 4</fullName>
    </alternativeName>
    <alternativeName>
        <fullName>IAP homolog A</fullName>
    </alternativeName>
    <alternativeName>
        <fullName>Inhibitor of apoptosis protein 3</fullName>
        <shortName>IAP-3</shortName>
        <shortName>rIAP-3</shortName>
        <shortName>rIAP3</shortName>
    </alternativeName>
    <alternativeName>
        <fullName>RING-type E3 ubiquitin transferase XIAP</fullName>
    </alternativeName>
    <alternativeName>
        <fullName>X-linked inhibitor of apoptosis protein</fullName>
        <shortName>X-linked IAP</shortName>
    </alternativeName>
</protein>
<sequence>MTFNSFEGSRTVVPADTNKDEEFVEEFNRLKTFANFPSSSPVSASTLARAGFLYTGEGDTVQCFSCHAAVDRWQYGDSAVGRHRRISPNCRFINGFYFENGATQSTSPGIQNGQYKSENCVGNRNHFALDRPSETHADYLLRTGQVVDISDTIYPRNPAMCSEEARLKTFQNWPDYAHLSPRELASAGLYYTGIDDQVQCFCCGGKLKNWEPCDRAWSEHRRHFPNCFFVLGRNVNVRSESGVSSDRNFPNSTNSPRNPAMAEYDARIVTFGTWLYSVNKEQLARAGFYALGEGDKVKCFHCGGGLTDWKPSEDPWEQHAKWYPGCKYLLDEKGQEYINNIHLTHSLGESVVRTAEKTPSVTKKIDDTIFQNPMVQEAIRMGFNFKDIKKTMEEKLQTSGSNYLSLEVLIADLVSAQKDNSQDESSQTSLQKDISTEEQLRRLQEEKLCKICMDRNIAIVFVPCGHLVTCKQCAEAVDKCPMCCTVITFKQKIFMS</sequence>
<organism>
    <name type="scientific">Rattus norvegicus</name>
    <name type="common">Rat</name>
    <dbReference type="NCBI Taxonomy" id="10116"/>
    <lineage>
        <taxon>Eukaryota</taxon>
        <taxon>Metazoa</taxon>
        <taxon>Chordata</taxon>
        <taxon>Craniata</taxon>
        <taxon>Vertebrata</taxon>
        <taxon>Euteleostomi</taxon>
        <taxon>Mammalia</taxon>
        <taxon>Eutheria</taxon>
        <taxon>Euarchontoglires</taxon>
        <taxon>Glires</taxon>
        <taxon>Rodentia</taxon>
        <taxon>Myomorpha</taxon>
        <taxon>Muroidea</taxon>
        <taxon>Muridae</taxon>
        <taxon>Murinae</taxon>
        <taxon>Rattus</taxon>
    </lineage>
</organism>
<reference key="1">
    <citation type="submission" date="1999-10" db="EMBL/GenBank/DDBJ databases">
        <title>Rattus norvegicus X-linked inhibitor of apoptosis (riap3) mRNA.</title>
        <authorList>
            <person name="Saito N."/>
        </authorList>
    </citation>
    <scope>NUCLEOTIDE SEQUENCE [MRNA]</scope>
</reference>
<proteinExistence type="evidence at transcript level"/>
<dbReference type="EC" id="2.3.2.27" evidence="2"/>
<dbReference type="EMBL" id="AB033366">
    <property type="protein sequence ID" value="BAA85304.1"/>
    <property type="molecule type" value="mRNA"/>
</dbReference>
<dbReference type="RefSeq" id="NP_071567.1">
    <property type="nucleotide sequence ID" value="NM_022231.2"/>
</dbReference>
<dbReference type="RefSeq" id="XP_006257570.1">
    <property type="nucleotide sequence ID" value="XM_006257508.3"/>
</dbReference>
<dbReference type="RefSeq" id="XP_006257571.1">
    <property type="nucleotide sequence ID" value="XM_006257509.5"/>
</dbReference>
<dbReference type="RefSeq" id="XP_017457637.1">
    <property type="nucleotide sequence ID" value="XM_017602148.1"/>
</dbReference>
<dbReference type="RefSeq" id="XP_017457638.1">
    <property type="nucleotide sequence ID" value="XM_017602149.1"/>
</dbReference>
<dbReference type="RefSeq" id="XP_017457639.1">
    <property type="nucleotide sequence ID" value="XM_017602150.1"/>
</dbReference>
<dbReference type="RefSeq" id="XP_017457640.1">
    <property type="nucleotide sequence ID" value="XM_017602151.1"/>
</dbReference>
<dbReference type="RefSeq" id="XP_038955946.1">
    <property type="nucleotide sequence ID" value="XM_039100018.2"/>
</dbReference>
<dbReference type="RefSeq" id="XP_063136347.1">
    <property type="nucleotide sequence ID" value="XM_063280277.1"/>
</dbReference>
<dbReference type="RefSeq" id="XP_063136348.1">
    <property type="nucleotide sequence ID" value="XM_063280278.1"/>
</dbReference>
<dbReference type="RefSeq" id="XP_063136349.1">
    <property type="nucleotide sequence ID" value="XM_063280279.1"/>
</dbReference>
<dbReference type="RefSeq" id="XP_063136350.1">
    <property type="nucleotide sequence ID" value="XM_063280280.1"/>
</dbReference>
<dbReference type="SMR" id="Q9R0I6"/>
<dbReference type="BioGRID" id="248914">
    <property type="interactions" value="5"/>
</dbReference>
<dbReference type="FunCoup" id="Q9R0I6">
    <property type="interactions" value="2817"/>
</dbReference>
<dbReference type="MINT" id="Q9R0I6"/>
<dbReference type="STRING" id="10116.ENSRNOP00000071268"/>
<dbReference type="MEROPS" id="I32.004"/>
<dbReference type="MEROPS" id="I32.007"/>
<dbReference type="iPTMnet" id="Q9R0I6"/>
<dbReference type="PhosphoSitePlus" id="Q9R0I6"/>
<dbReference type="PaxDb" id="10116-ENSRNOP00000009336"/>
<dbReference type="Ensembl" id="ENSRNOT00000009336.4">
    <property type="protein sequence ID" value="ENSRNOP00000009336.2"/>
    <property type="gene ID" value="ENSRNOG00000006967.8"/>
</dbReference>
<dbReference type="GeneID" id="63879"/>
<dbReference type="KEGG" id="rno:63879"/>
<dbReference type="UCSC" id="RGD:620692">
    <property type="organism name" value="rat"/>
</dbReference>
<dbReference type="AGR" id="RGD:620692"/>
<dbReference type="CTD" id="331"/>
<dbReference type="RGD" id="620692">
    <property type="gene designation" value="Xiap"/>
</dbReference>
<dbReference type="eggNOG" id="KOG1101">
    <property type="taxonomic scope" value="Eukaryota"/>
</dbReference>
<dbReference type="GeneTree" id="ENSGT00940000158743"/>
<dbReference type="HOGENOM" id="CLU_016347_1_1_1"/>
<dbReference type="InParanoid" id="Q9R0I6"/>
<dbReference type="OMA" id="CMDENIA"/>
<dbReference type="OrthoDB" id="5855668at2759"/>
<dbReference type="PhylomeDB" id="Q9R0I6"/>
<dbReference type="Reactome" id="R-RNO-111459">
    <property type="pathway name" value="Activation of caspases through apoptosome-mediated cleavage"/>
</dbReference>
<dbReference type="Reactome" id="R-RNO-111463">
    <property type="pathway name" value="SMAC (DIABLO) binds to IAPs"/>
</dbReference>
<dbReference type="Reactome" id="R-RNO-111464">
    <property type="pathway name" value="SMAC(DIABLO)-mediated dissociation of IAP:caspase complexes"/>
</dbReference>
<dbReference type="Reactome" id="R-RNO-111469">
    <property type="pathway name" value="SMAC, XIAP-regulated apoptotic response"/>
</dbReference>
<dbReference type="Reactome" id="R-RNO-3769402">
    <property type="pathway name" value="Deactivation of the beta-catenin transactivating complex"/>
</dbReference>
<dbReference type="Reactome" id="R-RNO-5357786">
    <property type="pathway name" value="TNFR1-induced proapoptotic signaling"/>
</dbReference>
<dbReference type="Reactome" id="R-RNO-5357905">
    <property type="pathway name" value="Regulation of TNFR1 signaling"/>
</dbReference>
<dbReference type="Reactome" id="R-RNO-5357956">
    <property type="pathway name" value="TNFR1-induced NF-kappa-B signaling pathway"/>
</dbReference>
<dbReference type="Reactome" id="R-RNO-5668541">
    <property type="pathway name" value="TNFR2 non-canonical NF-kB pathway"/>
</dbReference>
<dbReference type="Reactome" id="R-RNO-5675482">
    <property type="pathway name" value="Regulation of necroptotic cell death"/>
</dbReference>
<dbReference type="Reactome" id="R-RNO-5676594">
    <property type="pathway name" value="TNF receptor superfamily (TNFSF) members mediating non-canonical NF-kB pathway"/>
</dbReference>
<dbReference type="Reactome" id="R-RNO-8948747">
    <property type="pathway name" value="Regulation of PTEN localization"/>
</dbReference>
<dbReference type="Reactome" id="R-RNO-8948751">
    <property type="pathway name" value="Regulation of PTEN stability and activity"/>
</dbReference>
<dbReference type="Reactome" id="R-RNO-9627069">
    <property type="pathway name" value="Regulation of the apoptosome activity"/>
</dbReference>
<dbReference type="PRO" id="PR:Q9R0I6"/>
<dbReference type="Proteomes" id="UP000002494">
    <property type="component" value="Chromosome X"/>
</dbReference>
<dbReference type="Bgee" id="ENSRNOG00000006967">
    <property type="expression patterns" value="Expressed in duodenum and 19 other cell types or tissues"/>
</dbReference>
<dbReference type="ExpressionAtlas" id="Q9R0I6">
    <property type="expression patterns" value="baseline and differential"/>
</dbReference>
<dbReference type="GO" id="GO:0005737">
    <property type="term" value="C:cytoplasm"/>
    <property type="evidence" value="ECO:0000314"/>
    <property type="project" value="RGD"/>
</dbReference>
<dbReference type="GO" id="GO:0005634">
    <property type="term" value="C:nucleus"/>
    <property type="evidence" value="ECO:0000266"/>
    <property type="project" value="RGD"/>
</dbReference>
<dbReference type="GO" id="GO:0048471">
    <property type="term" value="C:perinuclear region of cytoplasm"/>
    <property type="evidence" value="ECO:0000314"/>
    <property type="project" value="RGD"/>
</dbReference>
<dbReference type="GO" id="GO:0032991">
    <property type="term" value="C:protein-containing complex"/>
    <property type="evidence" value="ECO:0000314"/>
    <property type="project" value="RGD"/>
</dbReference>
<dbReference type="GO" id="GO:0004869">
    <property type="term" value="F:cysteine-type endopeptidase inhibitor activity"/>
    <property type="evidence" value="ECO:0000266"/>
    <property type="project" value="RGD"/>
</dbReference>
<dbReference type="GO" id="GO:0043027">
    <property type="term" value="F:cysteine-type endopeptidase inhibitor activity involved in apoptotic process"/>
    <property type="evidence" value="ECO:0000318"/>
    <property type="project" value="GO_Central"/>
</dbReference>
<dbReference type="GO" id="GO:0042802">
    <property type="term" value="F:identical protein binding"/>
    <property type="evidence" value="ECO:0000266"/>
    <property type="project" value="RGD"/>
</dbReference>
<dbReference type="GO" id="GO:0002020">
    <property type="term" value="F:protease binding"/>
    <property type="evidence" value="ECO:0000353"/>
    <property type="project" value="RGD"/>
</dbReference>
<dbReference type="GO" id="GO:0120283">
    <property type="term" value="F:protein serine/threonine kinase binding"/>
    <property type="evidence" value="ECO:0000266"/>
    <property type="project" value="RGD"/>
</dbReference>
<dbReference type="GO" id="GO:0097110">
    <property type="term" value="F:scaffold protein binding"/>
    <property type="evidence" value="ECO:0000353"/>
    <property type="project" value="RGD"/>
</dbReference>
<dbReference type="GO" id="GO:0061630">
    <property type="term" value="F:ubiquitin protein ligase activity"/>
    <property type="evidence" value="ECO:0000266"/>
    <property type="project" value="RGD"/>
</dbReference>
<dbReference type="GO" id="GO:0004842">
    <property type="term" value="F:ubiquitin-protein transferase activity"/>
    <property type="evidence" value="ECO:0000250"/>
    <property type="project" value="UniProtKB"/>
</dbReference>
<dbReference type="GO" id="GO:0008270">
    <property type="term" value="F:zinc ion binding"/>
    <property type="evidence" value="ECO:0007669"/>
    <property type="project" value="UniProtKB-KW"/>
</dbReference>
<dbReference type="GO" id="GO:0070301">
    <property type="term" value="P:cellular response to hydrogen peroxide"/>
    <property type="evidence" value="ECO:0000270"/>
    <property type="project" value="RGD"/>
</dbReference>
<dbReference type="GO" id="GO:0042742">
    <property type="term" value="P:defense response to bacterium"/>
    <property type="evidence" value="ECO:0000266"/>
    <property type="project" value="RGD"/>
</dbReference>
<dbReference type="GO" id="GO:0006974">
    <property type="term" value="P:DNA damage response"/>
    <property type="evidence" value="ECO:0000266"/>
    <property type="project" value="RGD"/>
</dbReference>
<dbReference type="GO" id="GO:0043066">
    <property type="term" value="P:negative regulation of apoptotic process"/>
    <property type="evidence" value="ECO:0000315"/>
    <property type="project" value="RGD"/>
</dbReference>
<dbReference type="GO" id="GO:0043524">
    <property type="term" value="P:negative regulation of neuron apoptotic process"/>
    <property type="evidence" value="ECO:0000314"/>
    <property type="project" value="RGD"/>
</dbReference>
<dbReference type="GO" id="GO:0010804">
    <property type="term" value="P:negative regulation of tumor necrosis factor-mediated signaling pathway"/>
    <property type="evidence" value="ECO:0000266"/>
    <property type="project" value="RGD"/>
</dbReference>
<dbReference type="GO" id="GO:0051402">
    <property type="term" value="P:neuron apoptotic process"/>
    <property type="evidence" value="ECO:0000266"/>
    <property type="project" value="RGD"/>
</dbReference>
<dbReference type="GO" id="GO:0070427">
    <property type="term" value="P:nucleotide-binding oligomerization domain containing 1 signaling pathway"/>
    <property type="evidence" value="ECO:0000266"/>
    <property type="project" value="RGD"/>
</dbReference>
<dbReference type="GO" id="GO:0070431">
    <property type="term" value="P:nucleotide-binding oligomerization domain containing 2 signaling pathway"/>
    <property type="evidence" value="ECO:0000250"/>
    <property type="project" value="UniProtKB"/>
</dbReference>
<dbReference type="GO" id="GO:0043123">
    <property type="term" value="P:positive regulation of canonical NF-kappaB signal transduction"/>
    <property type="evidence" value="ECO:0000250"/>
    <property type="project" value="UniProtKB"/>
</dbReference>
<dbReference type="GO" id="GO:0090263">
    <property type="term" value="P:positive regulation of canonical Wnt signaling pathway"/>
    <property type="evidence" value="ECO:0000266"/>
    <property type="project" value="RGD"/>
</dbReference>
<dbReference type="GO" id="GO:0046330">
    <property type="term" value="P:positive regulation of JNK cascade"/>
    <property type="evidence" value="ECO:0000266"/>
    <property type="project" value="RGD"/>
</dbReference>
<dbReference type="GO" id="GO:1902530">
    <property type="term" value="P:positive regulation of protein linear polyubiquitination"/>
    <property type="evidence" value="ECO:0000250"/>
    <property type="project" value="UniProtKB"/>
</dbReference>
<dbReference type="GO" id="GO:0031398">
    <property type="term" value="P:positive regulation of protein ubiquitination"/>
    <property type="evidence" value="ECO:0000266"/>
    <property type="project" value="RGD"/>
</dbReference>
<dbReference type="GO" id="GO:0032481">
    <property type="term" value="P:positive regulation of type I interferon production"/>
    <property type="evidence" value="ECO:0000266"/>
    <property type="project" value="RGD"/>
</dbReference>
<dbReference type="GO" id="GO:0070534">
    <property type="term" value="P:protein K63-linked ubiquitination"/>
    <property type="evidence" value="ECO:0000266"/>
    <property type="project" value="RGD"/>
</dbReference>
<dbReference type="GO" id="GO:0060785">
    <property type="term" value="P:regulation of apoptosis involved in tissue homeostasis"/>
    <property type="evidence" value="ECO:0000266"/>
    <property type="project" value="RGD"/>
</dbReference>
<dbReference type="GO" id="GO:0042981">
    <property type="term" value="P:regulation of apoptotic process"/>
    <property type="evidence" value="ECO:0000266"/>
    <property type="project" value="RGD"/>
</dbReference>
<dbReference type="GO" id="GO:0051726">
    <property type="term" value="P:regulation of cell cycle"/>
    <property type="evidence" value="ECO:0000318"/>
    <property type="project" value="GO_Central"/>
</dbReference>
<dbReference type="GO" id="GO:0032496">
    <property type="term" value="P:response to lipopolysaccharide"/>
    <property type="evidence" value="ECO:0000266"/>
    <property type="project" value="RGD"/>
</dbReference>
<dbReference type="GO" id="GO:0016055">
    <property type="term" value="P:Wnt signaling pathway"/>
    <property type="evidence" value="ECO:0007669"/>
    <property type="project" value="UniProtKB-KW"/>
</dbReference>
<dbReference type="CDD" id="cd00022">
    <property type="entry name" value="BIR"/>
    <property type="match status" value="3"/>
</dbReference>
<dbReference type="CDD" id="cd16714">
    <property type="entry name" value="RING-HC_BIRC4_8"/>
    <property type="match status" value="1"/>
</dbReference>
<dbReference type="CDD" id="cd14395">
    <property type="entry name" value="UBA_BIRC4_8"/>
    <property type="match status" value="1"/>
</dbReference>
<dbReference type="FunFam" id="3.30.40.10:FF:000184">
    <property type="entry name" value="Baculoviral IAP repeat containing 2"/>
    <property type="match status" value="1"/>
</dbReference>
<dbReference type="FunFam" id="1.10.1170.10:FF:000002">
    <property type="entry name" value="Baculoviral IAP repeat containing 7"/>
    <property type="match status" value="1"/>
</dbReference>
<dbReference type="FunFam" id="1.10.1170.10:FF:000003">
    <property type="entry name" value="E3 ubiquitin-protein ligase XIAP"/>
    <property type="match status" value="1"/>
</dbReference>
<dbReference type="FunFam" id="1.10.1170.10:FF:000011">
    <property type="entry name" value="E3 ubiquitin-protein ligase XIAP"/>
    <property type="match status" value="1"/>
</dbReference>
<dbReference type="FunFam" id="1.10.533.10:FF:000050">
    <property type="entry name" value="E3 ubiquitin-protein ligase XIAP"/>
    <property type="match status" value="1"/>
</dbReference>
<dbReference type="FunFam" id="1.10.8.10:FF:000065">
    <property type="entry name" value="E3 ubiquitin-protein ligase XIAP isoform X1"/>
    <property type="match status" value="1"/>
</dbReference>
<dbReference type="FunFam" id="1.10.1170.10:FF:000008">
    <property type="entry name" value="Putative e3 ubiquitin-protein ligase xiap"/>
    <property type="match status" value="1"/>
</dbReference>
<dbReference type="Gene3D" id="1.10.8.10">
    <property type="entry name" value="DNA helicase RuvA subunit, C-terminal domain"/>
    <property type="match status" value="1"/>
</dbReference>
<dbReference type="Gene3D" id="1.10.1170.10">
    <property type="entry name" value="Inhibitor Of Apoptosis Protein (2mihbC-IAP-1), Chain A"/>
    <property type="match status" value="3"/>
</dbReference>
<dbReference type="Gene3D" id="3.30.40.10">
    <property type="entry name" value="Zinc/RING finger domain, C3HC4 (zinc finger)"/>
    <property type="match status" value="1"/>
</dbReference>
<dbReference type="InterPro" id="IPR001370">
    <property type="entry name" value="BIR_rpt"/>
</dbReference>
<dbReference type="InterPro" id="IPR048875">
    <property type="entry name" value="BIRC2-3-like_UBA"/>
</dbReference>
<dbReference type="InterPro" id="IPR050784">
    <property type="entry name" value="IAP"/>
</dbReference>
<dbReference type="InterPro" id="IPR042579">
    <property type="entry name" value="XIAP/BIRC8_UBA"/>
</dbReference>
<dbReference type="InterPro" id="IPR001841">
    <property type="entry name" value="Znf_RING"/>
</dbReference>
<dbReference type="InterPro" id="IPR013083">
    <property type="entry name" value="Znf_RING/FYVE/PHD"/>
</dbReference>
<dbReference type="PANTHER" id="PTHR10044:SF115">
    <property type="entry name" value="E3 UBIQUITIN-PROTEIN LIGASE XIAP"/>
    <property type="match status" value="1"/>
</dbReference>
<dbReference type="PANTHER" id="PTHR10044">
    <property type="entry name" value="INHIBITOR OF APOPTOSIS"/>
    <property type="match status" value="1"/>
</dbReference>
<dbReference type="Pfam" id="PF00653">
    <property type="entry name" value="BIR"/>
    <property type="match status" value="3"/>
</dbReference>
<dbReference type="Pfam" id="PF21290">
    <property type="entry name" value="UBA_BIRC2-3"/>
    <property type="match status" value="1"/>
</dbReference>
<dbReference type="Pfam" id="PF13920">
    <property type="entry name" value="zf-C3HC4_3"/>
    <property type="match status" value="1"/>
</dbReference>
<dbReference type="SMART" id="SM00238">
    <property type="entry name" value="BIR"/>
    <property type="match status" value="3"/>
</dbReference>
<dbReference type="SMART" id="SM00184">
    <property type="entry name" value="RING"/>
    <property type="match status" value="1"/>
</dbReference>
<dbReference type="SUPFAM" id="SSF57924">
    <property type="entry name" value="Inhibitor of apoptosis (IAP) repeat"/>
    <property type="match status" value="3"/>
</dbReference>
<dbReference type="PROSITE" id="PS01282">
    <property type="entry name" value="BIR_REPEAT_1"/>
    <property type="match status" value="3"/>
</dbReference>
<dbReference type="PROSITE" id="PS50143">
    <property type="entry name" value="BIR_REPEAT_2"/>
    <property type="match status" value="3"/>
</dbReference>
<dbReference type="PROSITE" id="PS50089">
    <property type="entry name" value="ZF_RING_2"/>
    <property type="match status" value="1"/>
</dbReference>
<name>XIAP_RAT</name>
<comment type="function">
    <text evidence="2">Multi-functional protein which regulates not only caspases and apoptosis, but also modulates inflammatory signaling and immunity, copper homeostasis, mitogenic kinase signaling, cell proliferation, as well as cell invasion and metastasis. Acts as a direct caspase inhibitor. Directly bind to the active site pocket of CASP3 and CASP7 and obstructs substrate entry. Inactivates CASP9 by keeping it in a monomeric, inactive state. Acts as an E3 ubiquitin-protein ligase regulating NF-kappa-B signaling and the target proteins for its E3 ubiquitin-protein ligase activity include: RIPK1, RIPK2, MAP3K2/MEKK2, DIABLO/SMAC, AIFM1, CCS, PTEN and BIRC5/survivin. Acts as an important regulator of innate immunity by mediating 'Lys-63'-linked polyubiquitination of RIPK2 downstream of NOD1 and NOD2, thereby transforming RIPK2 into a scaffolding protein for downstream effectors, ultimately leading to activation of the NF-kappa-B and MAP kinases signaling. 'Lys-63'-linked polyubiquitination of RIPK2 also promotes recruitment of the LUBAC complex to RIPK2. Regulates the BMP signaling pathway and the SMAD and MAP3K7/TAK1 dependent pathways leading to NF-kappa-B and JNK activation. Ubiquitination of CCS leads to enhancement of its chaperone activity toward its physiologic target, SOD1, rather than proteasomal degradation. Ubiquitination of MAP3K2/MEKK2 and AIFM1 does not lead to proteasomal degradation. Plays a role in copper homeostasis by ubiquitinating COMMD1 and promoting its proteasomal degradation. Can also function as E3 ubiquitin-protein ligase of the NEDD8 conjugation pathway, targeting effector caspases for neddylation and inactivation. Ubiquitinates and therefore mediates the proteasomal degradation of BCL2 in response to apoptosis. Protects cells from spontaneous formation of the ripoptosome, a large multi-protein complex that has the capability to kill cancer cells in a caspase-dependent and caspase-independent manner. Suppresses ripoptosome formation by ubiquitinating RIPK1 and CASP8. Acts as a positive regulator of Wnt signaling and ubiquitinates TLE1, TLE2, TLE3, TLE4 and AES. Ubiquitination of TLE3 results in inhibition of its interaction with TCF7L2/TCF4 thereby allowing efficient recruitment and binding of the transcriptional coactivator beta-catenin to TCF7L2/TCF4 that is required to initiate a Wnt-specific transcriptional program.</text>
</comment>
<comment type="catalytic activity">
    <reaction evidence="2">
        <text>S-ubiquitinyl-[E2 ubiquitin-conjugating enzyme]-L-cysteine + [acceptor protein]-L-lysine = [E2 ubiquitin-conjugating enzyme]-L-cysteine + N(6)-ubiquitinyl-[acceptor protein]-L-lysine.</text>
        <dbReference type="EC" id="2.3.2.27"/>
    </reaction>
</comment>
<comment type="subunit">
    <text evidence="1 2 3">Monomer, and homodimer. Interacts (via BIR3 domain) with DIABLO/SMAC; the interaction inhibits apoptotic suppressor activity (By similarity). Interacts with HTRA2/PRSS25; the interaction inhibits apoptotic suppressor activity. Interacts with TAB1/MAP3K7IP1 and AIFM1. Interaction with DIABLO/SMAC hinders binding of TAB1/MAP3K7IP1 and AIFM1. Interacts with TCF25 and COMMD1. Interacts (via BIR3 domain) with SEPTIN4 (By similarity). Interacts with RIP1, RIP2, RIP3, RIP4, CCS and USP19. Interacts (via BIR 2 domain and BIR 3 domain) with HAX1 (via C-terminus) and this interaction blocks ubiquitination of XIAP/BIRC4. Interacts with the monomeric form of BIRC5/survivin (By similarity). Interacts with TLE3 and TCF7L2/TCF4 (By similarity). Interacts (via BIR 3 and RING domains) with PDCL3 (By similarity).</text>
</comment>
<comment type="subcellular location">
    <subcellularLocation>
        <location evidence="2">Cytoplasm</location>
    </subcellularLocation>
    <subcellularLocation>
        <location evidence="2">Nucleus</location>
    </subcellularLocation>
    <text evidence="2">TLE3 promotes its nuclear localization.</text>
</comment>
<comment type="domain">
    <text evidence="2">The first BIR domain is involved in interaction with TAB1/MAP3K7IP1 and is important for dimerization. The second BIR domain is sufficient to inhibit caspase-3 and caspase-7, while the third BIR is involved in caspase-9 inhibition. The interactions with DIABLO/SMAC and HTRA2/PRSS25 are mediated by the second and third BIR domains (By similarity).</text>
</comment>
<comment type="PTM">
    <text evidence="2">S-Nitrosylation down-regulates its E3 ubiquitin-protein ligase activity.</text>
</comment>
<comment type="PTM">
    <text evidence="2">Autoubiquitinated. Ubiquitinated by TRIM32; leading to proteasomal degradation.</text>
</comment>
<comment type="similarity">
    <text evidence="6">Belongs to the IAP family.</text>
</comment>
<keyword id="KW-0053">Apoptosis</keyword>
<keyword id="KW-0963">Cytoplasm</keyword>
<keyword id="KW-1017">Isopeptide bond</keyword>
<keyword id="KW-0479">Metal-binding</keyword>
<keyword id="KW-0539">Nucleus</keyword>
<keyword id="KW-0597">Phosphoprotein</keyword>
<keyword id="KW-1185">Reference proteome</keyword>
<keyword id="KW-0677">Repeat</keyword>
<keyword id="KW-0702">S-nitrosylation</keyword>
<keyword id="KW-0808">Transferase</keyword>
<keyword id="KW-0832">Ubl conjugation</keyword>
<keyword id="KW-0833">Ubl conjugation pathway</keyword>
<keyword id="KW-0879">Wnt signaling pathway</keyword>
<keyword id="KW-0862">Zinc</keyword>
<keyword id="KW-0863">Zinc-finger</keyword>